<name>RL7_BACHK</name>
<accession>Q6HPR8</accession>
<comment type="function">
    <text evidence="1">Forms part of the ribosomal stalk which helps the ribosome interact with GTP-bound translation factors. Is thus essential for accurate translation.</text>
</comment>
<comment type="subunit">
    <text evidence="1">Homodimer. Part of the ribosomal stalk of the 50S ribosomal subunit. Forms a multimeric L10(L12)X complex, where L10 forms an elongated spine to which 2 to 4 L12 dimers bind in a sequential fashion. Binds GTP-bound translation factors.</text>
</comment>
<comment type="similarity">
    <text evidence="1">Belongs to the bacterial ribosomal protein bL12 family.</text>
</comment>
<proteinExistence type="inferred from homology"/>
<dbReference type="EMBL" id="AE017355">
    <property type="protein sequence ID" value="AAT61491.1"/>
    <property type="molecule type" value="Genomic_DNA"/>
</dbReference>
<dbReference type="RefSeq" id="WP_000159736.1">
    <property type="nucleotide sequence ID" value="NC_005957.1"/>
</dbReference>
<dbReference type="RefSeq" id="YP_034452.1">
    <property type="nucleotide sequence ID" value="NC_005957.1"/>
</dbReference>
<dbReference type="SMR" id="Q6HPR8"/>
<dbReference type="GeneID" id="93010953"/>
<dbReference type="KEGG" id="btk:BT9727_0096"/>
<dbReference type="PATRIC" id="fig|281309.8.peg.97"/>
<dbReference type="HOGENOM" id="CLU_086499_3_2_9"/>
<dbReference type="Proteomes" id="UP000001301">
    <property type="component" value="Chromosome"/>
</dbReference>
<dbReference type="GO" id="GO:0022625">
    <property type="term" value="C:cytosolic large ribosomal subunit"/>
    <property type="evidence" value="ECO:0007669"/>
    <property type="project" value="TreeGrafter"/>
</dbReference>
<dbReference type="GO" id="GO:0003729">
    <property type="term" value="F:mRNA binding"/>
    <property type="evidence" value="ECO:0007669"/>
    <property type="project" value="TreeGrafter"/>
</dbReference>
<dbReference type="GO" id="GO:0003735">
    <property type="term" value="F:structural constituent of ribosome"/>
    <property type="evidence" value="ECO:0007669"/>
    <property type="project" value="InterPro"/>
</dbReference>
<dbReference type="GO" id="GO:0006412">
    <property type="term" value="P:translation"/>
    <property type="evidence" value="ECO:0007669"/>
    <property type="project" value="UniProtKB-UniRule"/>
</dbReference>
<dbReference type="CDD" id="cd00387">
    <property type="entry name" value="Ribosomal_L7_L12"/>
    <property type="match status" value="1"/>
</dbReference>
<dbReference type="FunFam" id="1.20.5.710:FF:000002">
    <property type="entry name" value="50S ribosomal protein L7/L12"/>
    <property type="match status" value="1"/>
</dbReference>
<dbReference type="FunFam" id="3.30.1390.10:FF:000001">
    <property type="entry name" value="50S ribosomal protein L7/L12"/>
    <property type="match status" value="1"/>
</dbReference>
<dbReference type="Gene3D" id="3.30.1390.10">
    <property type="match status" value="1"/>
</dbReference>
<dbReference type="Gene3D" id="1.20.5.710">
    <property type="entry name" value="Single helix bin"/>
    <property type="match status" value="1"/>
</dbReference>
<dbReference type="HAMAP" id="MF_00368">
    <property type="entry name" value="Ribosomal_bL12"/>
    <property type="match status" value="1"/>
</dbReference>
<dbReference type="InterPro" id="IPR000206">
    <property type="entry name" value="Ribosomal_bL12"/>
</dbReference>
<dbReference type="InterPro" id="IPR013823">
    <property type="entry name" value="Ribosomal_bL12_C"/>
</dbReference>
<dbReference type="InterPro" id="IPR014719">
    <property type="entry name" value="Ribosomal_bL12_C/ClpS-like"/>
</dbReference>
<dbReference type="InterPro" id="IPR008932">
    <property type="entry name" value="Ribosomal_bL12_oligo"/>
</dbReference>
<dbReference type="InterPro" id="IPR036235">
    <property type="entry name" value="Ribosomal_bL12_oligo_N_sf"/>
</dbReference>
<dbReference type="NCBIfam" id="TIGR00855">
    <property type="entry name" value="L12"/>
    <property type="match status" value="1"/>
</dbReference>
<dbReference type="PANTHER" id="PTHR45987">
    <property type="entry name" value="39S RIBOSOMAL PROTEIN L12"/>
    <property type="match status" value="1"/>
</dbReference>
<dbReference type="PANTHER" id="PTHR45987:SF4">
    <property type="entry name" value="LARGE RIBOSOMAL SUBUNIT PROTEIN BL12M"/>
    <property type="match status" value="1"/>
</dbReference>
<dbReference type="Pfam" id="PF00542">
    <property type="entry name" value="Ribosomal_L12"/>
    <property type="match status" value="1"/>
</dbReference>
<dbReference type="Pfam" id="PF16320">
    <property type="entry name" value="Ribosomal_L12_N"/>
    <property type="match status" value="1"/>
</dbReference>
<dbReference type="SUPFAM" id="SSF54736">
    <property type="entry name" value="ClpS-like"/>
    <property type="match status" value="1"/>
</dbReference>
<dbReference type="SUPFAM" id="SSF48300">
    <property type="entry name" value="Ribosomal protein L7/12, oligomerisation (N-terminal) domain"/>
    <property type="match status" value="1"/>
</dbReference>
<keyword id="KW-0687">Ribonucleoprotein</keyword>
<keyword id="KW-0689">Ribosomal protein</keyword>
<evidence type="ECO:0000255" key="1">
    <source>
        <dbReference type="HAMAP-Rule" id="MF_00368"/>
    </source>
</evidence>
<evidence type="ECO:0000305" key="2"/>
<protein>
    <recommendedName>
        <fullName evidence="1">Large ribosomal subunit protein bL12</fullName>
    </recommendedName>
    <alternativeName>
        <fullName evidence="2">50S ribosomal protein L7/L12</fullName>
    </alternativeName>
</protein>
<sequence length="119" mass="12517">MTKEQIIEAVKSMTVLELNDLVKAIEEEFGVTAAAPVAVAGGAGEAAAEKTEFDVELTSAGAQKIKVIKVVREITGLGLKEAKELVDNTPKVIKEAAAKEEAEEIKAKLEEVGAAVEVK</sequence>
<feature type="chain" id="PRO_0000243384" description="Large ribosomal subunit protein bL12">
    <location>
        <begin position="1"/>
        <end position="119"/>
    </location>
</feature>
<reference key="1">
    <citation type="journal article" date="2006" name="J. Bacteriol.">
        <title>Pathogenomic sequence analysis of Bacillus cereus and Bacillus thuringiensis isolates closely related to Bacillus anthracis.</title>
        <authorList>
            <person name="Han C.S."/>
            <person name="Xie G."/>
            <person name="Challacombe J.F."/>
            <person name="Altherr M.R."/>
            <person name="Bhotika S.S."/>
            <person name="Bruce D."/>
            <person name="Campbell C.S."/>
            <person name="Campbell M.L."/>
            <person name="Chen J."/>
            <person name="Chertkov O."/>
            <person name="Cleland C."/>
            <person name="Dimitrijevic M."/>
            <person name="Doggett N.A."/>
            <person name="Fawcett J.J."/>
            <person name="Glavina T."/>
            <person name="Goodwin L.A."/>
            <person name="Hill K.K."/>
            <person name="Hitchcock P."/>
            <person name="Jackson P.J."/>
            <person name="Keim P."/>
            <person name="Kewalramani A.R."/>
            <person name="Longmire J."/>
            <person name="Lucas S."/>
            <person name="Malfatti S."/>
            <person name="McMurry K."/>
            <person name="Meincke L.J."/>
            <person name="Misra M."/>
            <person name="Moseman B.L."/>
            <person name="Mundt M."/>
            <person name="Munk A.C."/>
            <person name="Okinaka R.T."/>
            <person name="Parson-Quintana B."/>
            <person name="Reilly L.P."/>
            <person name="Richardson P."/>
            <person name="Robinson D.L."/>
            <person name="Rubin E."/>
            <person name="Saunders E."/>
            <person name="Tapia R."/>
            <person name="Tesmer J.G."/>
            <person name="Thayer N."/>
            <person name="Thompson L.S."/>
            <person name="Tice H."/>
            <person name="Ticknor L.O."/>
            <person name="Wills P.L."/>
            <person name="Brettin T.S."/>
            <person name="Gilna P."/>
        </authorList>
    </citation>
    <scope>NUCLEOTIDE SEQUENCE [LARGE SCALE GENOMIC DNA]</scope>
    <source>
        <strain>97-27</strain>
    </source>
</reference>
<organism>
    <name type="scientific">Bacillus thuringiensis subsp. konkukian (strain 97-27)</name>
    <dbReference type="NCBI Taxonomy" id="281309"/>
    <lineage>
        <taxon>Bacteria</taxon>
        <taxon>Bacillati</taxon>
        <taxon>Bacillota</taxon>
        <taxon>Bacilli</taxon>
        <taxon>Bacillales</taxon>
        <taxon>Bacillaceae</taxon>
        <taxon>Bacillus</taxon>
        <taxon>Bacillus cereus group</taxon>
    </lineage>
</organism>
<gene>
    <name evidence="1" type="primary">rplL</name>
    <name type="ordered locus">BT9727_0096</name>
</gene>